<keyword id="KW-0963">Cytoplasm</keyword>
<keyword id="KW-1185">Reference proteome</keyword>
<keyword id="KW-0687">Ribonucleoprotein</keyword>
<keyword id="KW-0689">Ribosomal protein</keyword>
<sequence length="262" mass="29985">MAVGKNKRTSKGKKGGKKKVTDVFTKKEWYDLNAPKMFMVRKFGKTLVTKTIGKKLATDGLKGRIYEVNLADLNNDEDQAHKKIKLICDHIINRDCYTDFCGLSITRDKLCSLIRKGYTLIEGCTDVKTIDNYHLRMFCIAFTKKRPNQTKTTCYAQTSQIKKIRKKMVDIMHAEASKVLLKDLVKKIIPESIGKEVEKQCKKIFPLQNVLIRKVKILKRPKLDISKLMELHSDPKEDSGKNVKSLPESKEATNILTAELKH</sequence>
<comment type="subunit">
    <text evidence="1">Component of the small ribosomal subunit. Mature ribosomes consist of a small (40S) and a large (60S) subunit. The 40S subunit contains about 33 different proteins and 1 molecule of RNA (18S). The 60S subunit contains about 49 different proteins and 3 molecules of RNA (25S, 5.8S and 5S).</text>
</comment>
<comment type="subcellular location">
    <subcellularLocation>
        <location evidence="1">Cytoplasm</location>
    </subcellularLocation>
</comment>
<comment type="similarity">
    <text evidence="1">Belongs to the eukaryotic ribosomal protein eS1 family.</text>
</comment>
<comment type="sequence caution" evidence="3">
    <conflict type="erroneous gene model prediction">
        <sequence resource="EMBL-CDS" id="EAA21728"/>
    </conflict>
</comment>
<feature type="initiator methionine" description="Removed" evidence="1">
    <location>
        <position position="1"/>
    </location>
</feature>
<feature type="chain" id="PRO_0000389339" description="Small ribosomal subunit protein eS1">
    <location>
        <begin position="2"/>
        <end position="262"/>
    </location>
</feature>
<feature type="region of interest" description="Disordered" evidence="2">
    <location>
        <begin position="234"/>
        <end position="262"/>
    </location>
</feature>
<feature type="compositionally biased region" description="Basic and acidic residues" evidence="2">
    <location>
        <begin position="234"/>
        <end position="251"/>
    </location>
</feature>
<evidence type="ECO:0000255" key="1">
    <source>
        <dbReference type="HAMAP-Rule" id="MF_03122"/>
    </source>
</evidence>
<evidence type="ECO:0000256" key="2">
    <source>
        <dbReference type="SAM" id="MobiDB-lite"/>
    </source>
</evidence>
<evidence type="ECO:0000305" key="3"/>
<name>RS3A_PLAYO</name>
<organism>
    <name type="scientific">Plasmodium yoelii yoelii</name>
    <dbReference type="NCBI Taxonomy" id="73239"/>
    <lineage>
        <taxon>Eukaryota</taxon>
        <taxon>Sar</taxon>
        <taxon>Alveolata</taxon>
        <taxon>Apicomplexa</taxon>
        <taxon>Aconoidasida</taxon>
        <taxon>Haemosporida</taxon>
        <taxon>Plasmodiidae</taxon>
        <taxon>Plasmodium</taxon>
        <taxon>Plasmodium (Vinckeia)</taxon>
    </lineage>
</organism>
<accession>Q7RM92</accession>
<dbReference type="EMBL" id="AABL01000628">
    <property type="protein sequence ID" value="EAA21728.1"/>
    <property type="status" value="ALT_SEQ"/>
    <property type="molecule type" value="Genomic_DNA"/>
</dbReference>
<dbReference type="SMR" id="Q7RM92"/>
<dbReference type="FunCoup" id="Q7RM92">
    <property type="interactions" value="364"/>
</dbReference>
<dbReference type="STRING" id="73239.Q7RM92"/>
<dbReference type="PaxDb" id="73239-Q7RM92"/>
<dbReference type="EnsemblProtists" id="EAA21728">
    <property type="protein sequence ID" value="EAA21728"/>
    <property type="gene ID" value="EAA21728"/>
</dbReference>
<dbReference type="VEuPathDB" id="PlasmoDB:Py17XNL_001205053"/>
<dbReference type="InParanoid" id="Q7RM92"/>
<dbReference type="Proteomes" id="UP000008553">
    <property type="component" value="Unassembled WGS sequence"/>
</dbReference>
<dbReference type="GO" id="GO:0022627">
    <property type="term" value="C:cytosolic small ribosomal subunit"/>
    <property type="evidence" value="ECO:0007669"/>
    <property type="project" value="UniProtKB-UniRule"/>
</dbReference>
<dbReference type="GO" id="GO:0003735">
    <property type="term" value="F:structural constituent of ribosome"/>
    <property type="evidence" value="ECO:0007669"/>
    <property type="project" value="UniProtKB-UniRule"/>
</dbReference>
<dbReference type="GO" id="GO:0006412">
    <property type="term" value="P:translation"/>
    <property type="evidence" value="ECO:0007669"/>
    <property type="project" value="UniProtKB-UniRule"/>
</dbReference>
<dbReference type="HAMAP" id="MF_03122">
    <property type="entry name" value="Ribosomal_eS1_euk"/>
    <property type="match status" value="1"/>
</dbReference>
<dbReference type="InterPro" id="IPR001593">
    <property type="entry name" value="Ribosomal_eS1"/>
</dbReference>
<dbReference type="InterPro" id="IPR027500">
    <property type="entry name" value="Ribosomal_eS1_euk"/>
</dbReference>
<dbReference type="PANTHER" id="PTHR11830">
    <property type="entry name" value="40S RIBOSOMAL PROTEIN S3A"/>
    <property type="match status" value="1"/>
</dbReference>
<dbReference type="Pfam" id="PF01015">
    <property type="entry name" value="Ribosomal_S3Ae"/>
    <property type="match status" value="1"/>
</dbReference>
<dbReference type="SMART" id="SM01397">
    <property type="entry name" value="Ribosomal_S3Ae"/>
    <property type="match status" value="1"/>
</dbReference>
<reference key="1">
    <citation type="journal article" date="2002" name="Nature">
        <title>Genome sequence and comparative analysis of the model rodent malaria parasite Plasmodium yoelii yoelii.</title>
        <authorList>
            <person name="Carlton J.M."/>
            <person name="Angiuoli S.V."/>
            <person name="Suh B.B."/>
            <person name="Kooij T.W."/>
            <person name="Pertea M."/>
            <person name="Silva J.C."/>
            <person name="Ermolaeva M.D."/>
            <person name="Allen J.E."/>
            <person name="Selengut J.D."/>
            <person name="Koo H.L."/>
            <person name="Peterson J.D."/>
            <person name="Pop M."/>
            <person name="Kosack D.S."/>
            <person name="Shumway M.F."/>
            <person name="Bidwell S.L."/>
            <person name="Shallom S.J."/>
            <person name="van Aken S.E."/>
            <person name="Riedmuller S.B."/>
            <person name="Feldblyum T.V."/>
            <person name="Cho J.K."/>
            <person name="Quackenbush J."/>
            <person name="Sedegah M."/>
            <person name="Shoaibi A."/>
            <person name="Cummings L.M."/>
            <person name="Florens L."/>
            <person name="Yates J.R. III"/>
            <person name="Raine J.D."/>
            <person name="Sinden R.E."/>
            <person name="Harris M.A."/>
            <person name="Cunningham D.A."/>
            <person name="Preiser P.R."/>
            <person name="Bergman L.W."/>
            <person name="Vaidya A.B."/>
            <person name="van Lin L.H."/>
            <person name="Janse C.J."/>
            <person name="Waters A.P."/>
            <person name="Smith H.O."/>
            <person name="White O.R."/>
            <person name="Salzberg S.L."/>
            <person name="Venter J.C."/>
            <person name="Fraser C.M."/>
            <person name="Hoffman S.L."/>
            <person name="Gardner M.J."/>
            <person name="Carucci D.J."/>
        </authorList>
    </citation>
    <scope>NUCLEOTIDE SEQUENCE [LARGE SCALE GENOMIC DNA]</scope>
    <source>
        <strain>17XNL</strain>
    </source>
</reference>
<proteinExistence type="inferred from homology"/>
<gene>
    <name type="ORF">PY02291</name>
</gene>
<protein>
    <recommendedName>
        <fullName evidence="1">Small ribosomal subunit protein eS1</fullName>
    </recommendedName>
    <alternativeName>
        <fullName evidence="3">40S ribosomal protein S3a</fullName>
    </alternativeName>
</protein>